<accession>Q3ZJ70</accession>
<gene>
    <name evidence="1" type="primary">psaJ</name>
</gene>
<name>PSAJ_TUPAK</name>
<reference key="1">
    <citation type="journal article" date="2005" name="Mol. Biol. Evol.">
        <title>The chloroplast genome sequence of the green alga Pseudendoclonium akinetum (Ulvophyceae) reveals unusual structural features and new insights into the branching order of chlorophyte lineages.</title>
        <authorList>
            <person name="Pombert J.-F."/>
            <person name="Otis C."/>
            <person name="Lemieux C."/>
            <person name="Turmel M."/>
        </authorList>
    </citation>
    <scope>NUCLEOTIDE SEQUENCE [LARGE SCALE GENOMIC DNA]</scope>
    <source>
        <strain>UTEX 1912</strain>
    </source>
</reference>
<comment type="function">
    <text evidence="1">May help in the organization of the PsaE and PsaF subunits.</text>
</comment>
<comment type="subcellular location">
    <subcellularLocation>
        <location evidence="1">Plastid</location>
        <location evidence="1">Chloroplast thylakoid membrane</location>
        <topology evidence="1">Single-pass membrane protein</topology>
    </subcellularLocation>
</comment>
<comment type="similarity">
    <text evidence="1">Belongs to the PsaJ family.</text>
</comment>
<evidence type="ECO:0000255" key="1">
    <source>
        <dbReference type="HAMAP-Rule" id="MF_00522"/>
    </source>
</evidence>
<feature type="chain" id="PRO_0000276073" description="Photosystem I reaction center subunit IX">
    <location>
        <begin position="1"/>
        <end position="41"/>
    </location>
</feature>
<feature type="transmembrane region" description="Helical" evidence="1">
    <location>
        <begin position="7"/>
        <end position="27"/>
    </location>
</feature>
<geneLocation type="chloroplast"/>
<dbReference type="EMBL" id="AY835431">
    <property type="protein sequence ID" value="AAV80621.1"/>
    <property type="molecule type" value="Genomic_DNA"/>
</dbReference>
<dbReference type="RefSeq" id="YP_636197.1">
    <property type="nucleotide sequence ID" value="NC_008114.1"/>
</dbReference>
<dbReference type="SMR" id="Q3ZJ70"/>
<dbReference type="GeneID" id="4108801"/>
<dbReference type="GO" id="GO:0009535">
    <property type="term" value="C:chloroplast thylakoid membrane"/>
    <property type="evidence" value="ECO:0007669"/>
    <property type="project" value="UniProtKB-SubCell"/>
</dbReference>
<dbReference type="GO" id="GO:0009522">
    <property type="term" value="C:photosystem I"/>
    <property type="evidence" value="ECO:0007669"/>
    <property type="project" value="UniProtKB-KW"/>
</dbReference>
<dbReference type="GO" id="GO:0015979">
    <property type="term" value="P:photosynthesis"/>
    <property type="evidence" value="ECO:0007669"/>
    <property type="project" value="UniProtKB-UniRule"/>
</dbReference>
<dbReference type="Gene3D" id="1.20.5.510">
    <property type="entry name" value="Single helix bin"/>
    <property type="match status" value="1"/>
</dbReference>
<dbReference type="HAMAP" id="MF_00522">
    <property type="entry name" value="PSI_PsaJ"/>
    <property type="match status" value="1"/>
</dbReference>
<dbReference type="InterPro" id="IPR002615">
    <property type="entry name" value="PSI_PsaJ"/>
</dbReference>
<dbReference type="InterPro" id="IPR036062">
    <property type="entry name" value="PSI_PsaJ_sf"/>
</dbReference>
<dbReference type="PANTHER" id="PTHR36082">
    <property type="match status" value="1"/>
</dbReference>
<dbReference type="PANTHER" id="PTHR36082:SF2">
    <property type="entry name" value="PHOTOSYSTEM I REACTION CENTER SUBUNIT IX"/>
    <property type="match status" value="1"/>
</dbReference>
<dbReference type="Pfam" id="PF01701">
    <property type="entry name" value="PSI_PsaJ"/>
    <property type="match status" value="1"/>
</dbReference>
<dbReference type="SUPFAM" id="SSF81544">
    <property type="entry name" value="Subunit IX of photosystem I reaction centre, PsaJ"/>
    <property type="match status" value="1"/>
</dbReference>
<keyword id="KW-0150">Chloroplast</keyword>
<keyword id="KW-0472">Membrane</keyword>
<keyword id="KW-0602">Photosynthesis</keyword>
<keyword id="KW-0603">Photosystem I</keyword>
<keyword id="KW-0934">Plastid</keyword>
<keyword id="KW-0793">Thylakoid</keyword>
<keyword id="KW-0812">Transmembrane</keyword>
<keyword id="KW-1133">Transmembrane helix</keyword>
<protein>
    <recommendedName>
        <fullName evidence="1">Photosystem I reaction center subunit IX</fullName>
    </recommendedName>
    <alternativeName>
        <fullName evidence="1">PSI-J</fullName>
    </alternativeName>
</protein>
<sequence>MKDFVTYLSTAPVIALAWMSFTAGLLIEINRFFPDPLVFTF</sequence>
<proteinExistence type="inferred from homology"/>
<organism>
    <name type="scientific">Tupiella akineta</name>
    <name type="common">Green alga</name>
    <name type="synonym">Pseudendoclonium akinetum</name>
    <dbReference type="NCBI Taxonomy" id="160070"/>
    <lineage>
        <taxon>Eukaryota</taxon>
        <taxon>Viridiplantae</taxon>
        <taxon>Chlorophyta</taxon>
        <taxon>Ulvophyceae</taxon>
        <taxon>OUU clade</taxon>
        <taxon>Ulotrichales</taxon>
        <taxon>Tupiellaceae</taxon>
        <taxon>Tupiella</taxon>
    </lineage>
</organism>